<comment type="similarity">
    <text evidence="1">Belongs to the UPF0757 family.</text>
</comment>
<comment type="sequence caution" evidence="2">
    <conflict type="erroneous initiation">
        <sequence resource="EMBL-CDS" id="CAR18033"/>
    </conflict>
</comment>
<name>YMGG_ECO7I</name>
<gene>
    <name evidence="1" type="primary">ymgG</name>
    <name type="ordered locus">ECIAI39_1902</name>
</gene>
<dbReference type="EMBL" id="CU928164">
    <property type="protein sequence ID" value="CAR18033.1"/>
    <property type="status" value="ALT_INIT"/>
    <property type="molecule type" value="Genomic_DNA"/>
</dbReference>
<dbReference type="RefSeq" id="WP_000726974.1">
    <property type="nucleotide sequence ID" value="NC_011750.1"/>
</dbReference>
<dbReference type="RefSeq" id="YP_002407879.1">
    <property type="nucleotide sequence ID" value="NC_011750.1"/>
</dbReference>
<dbReference type="STRING" id="585057.ECIAI39_1902"/>
<dbReference type="KEGG" id="ect:ECIAI39_1902"/>
<dbReference type="PATRIC" id="fig|585057.6.peg.1980"/>
<dbReference type="HOGENOM" id="CLU_164687_0_0_6"/>
<dbReference type="Proteomes" id="UP000000749">
    <property type="component" value="Chromosome"/>
</dbReference>
<dbReference type="HAMAP" id="MF_01455">
    <property type="entry name" value="UPF0757"/>
    <property type="match status" value="1"/>
</dbReference>
<dbReference type="InterPro" id="IPR025693">
    <property type="entry name" value="Gly-zipper_OmpA-like_dom"/>
</dbReference>
<dbReference type="InterPro" id="IPR027367">
    <property type="entry name" value="Gly-zipper_YMGG"/>
</dbReference>
<dbReference type="InterPro" id="IPR022833">
    <property type="entry name" value="UPF0757_YmgG"/>
</dbReference>
<dbReference type="Pfam" id="PF13436">
    <property type="entry name" value="Gly-zipper_OmpA"/>
    <property type="match status" value="1"/>
</dbReference>
<dbReference type="Pfam" id="PF13441">
    <property type="entry name" value="Gly-zipper_YMGG"/>
    <property type="match status" value="1"/>
</dbReference>
<accession>B7NJH1</accession>
<sequence length="114" mass="10807">MKKKILAFGLISALFCSTPAMADMNRTTKGALLGAGVGLLTGNGVNGVLKGAAVGAGVGAVTEKGRDGKNARKGAKVGAAVGAVTGVLTGNGLEGAIKGAVIGGTGGAILGKMK</sequence>
<organism>
    <name type="scientific">Escherichia coli O7:K1 (strain IAI39 / ExPEC)</name>
    <dbReference type="NCBI Taxonomy" id="585057"/>
    <lineage>
        <taxon>Bacteria</taxon>
        <taxon>Pseudomonadati</taxon>
        <taxon>Pseudomonadota</taxon>
        <taxon>Gammaproteobacteria</taxon>
        <taxon>Enterobacterales</taxon>
        <taxon>Enterobacteriaceae</taxon>
        <taxon>Escherichia</taxon>
    </lineage>
</organism>
<evidence type="ECO:0000255" key="1">
    <source>
        <dbReference type="HAMAP-Rule" id="MF_01455"/>
    </source>
</evidence>
<evidence type="ECO:0000305" key="2"/>
<feature type="chain" id="PRO_0000388959" description="UPF0757 protein YmgG">
    <location>
        <begin position="1"/>
        <end position="114"/>
    </location>
</feature>
<protein>
    <recommendedName>
        <fullName evidence="1">UPF0757 protein YmgG</fullName>
    </recommendedName>
</protein>
<reference key="1">
    <citation type="journal article" date="2009" name="PLoS Genet.">
        <title>Organised genome dynamics in the Escherichia coli species results in highly diverse adaptive paths.</title>
        <authorList>
            <person name="Touchon M."/>
            <person name="Hoede C."/>
            <person name="Tenaillon O."/>
            <person name="Barbe V."/>
            <person name="Baeriswyl S."/>
            <person name="Bidet P."/>
            <person name="Bingen E."/>
            <person name="Bonacorsi S."/>
            <person name="Bouchier C."/>
            <person name="Bouvet O."/>
            <person name="Calteau A."/>
            <person name="Chiapello H."/>
            <person name="Clermont O."/>
            <person name="Cruveiller S."/>
            <person name="Danchin A."/>
            <person name="Diard M."/>
            <person name="Dossat C."/>
            <person name="Karoui M.E."/>
            <person name="Frapy E."/>
            <person name="Garry L."/>
            <person name="Ghigo J.M."/>
            <person name="Gilles A.M."/>
            <person name="Johnson J."/>
            <person name="Le Bouguenec C."/>
            <person name="Lescat M."/>
            <person name="Mangenot S."/>
            <person name="Martinez-Jehanne V."/>
            <person name="Matic I."/>
            <person name="Nassif X."/>
            <person name="Oztas S."/>
            <person name="Petit M.A."/>
            <person name="Pichon C."/>
            <person name="Rouy Z."/>
            <person name="Ruf C.S."/>
            <person name="Schneider D."/>
            <person name="Tourret J."/>
            <person name="Vacherie B."/>
            <person name="Vallenet D."/>
            <person name="Medigue C."/>
            <person name="Rocha E.P.C."/>
            <person name="Denamur E."/>
        </authorList>
    </citation>
    <scope>NUCLEOTIDE SEQUENCE [LARGE SCALE GENOMIC DNA]</scope>
    <source>
        <strain>IAI39 / ExPEC</strain>
    </source>
</reference>
<proteinExistence type="inferred from homology"/>